<keyword id="KW-0963">Cytoplasm</keyword>
<keyword id="KW-0479">Metal-binding</keyword>
<keyword id="KW-1185">Reference proteome</keyword>
<keyword id="KW-0808">Transferase</keyword>
<keyword id="KW-0833">Ubl conjugation pathway</keyword>
<keyword id="KW-0862">Zinc</keyword>
<keyword id="KW-0863">Zinc-finger</keyword>
<dbReference type="EC" id="2.3.2.27"/>
<dbReference type="EMBL" id="BC106547">
    <property type="protein sequence ID" value="AAI06548.1"/>
    <property type="molecule type" value="mRNA"/>
</dbReference>
<dbReference type="RefSeq" id="NP_001089778.1">
    <property type="nucleotide sequence ID" value="NM_001096309.1"/>
</dbReference>
<dbReference type="SMR" id="Q3KPU8"/>
<dbReference type="DNASU" id="734843"/>
<dbReference type="GeneID" id="734843"/>
<dbReference type="KEGG" id="xla:734843"/>
<dbReference type="AGR" id="Xenbase:XB-GENE-17341062"/>
<dbReference type="CTD" id="734843"/>
<dbReference type="Xenbase" id="XB-GENE-17341062">
    <property type="gene designation" value="rnf166.L"/>
</dbReference>
<dbReference type="OrthoDB" id="6270329at2759"/>
<dbReference type="UniPathway" id="UPA00143"/>
<dbReference type="Proteomes" id="UP000186698">
    <property type="component" value="Chromosome 4L"/>
</dbReference>
<dbReference type="Bgee" id="734843">
    <property type="expression patterns" value="Expressed in testis and 19 other cell types or tissues"/>
</dbReference>
<dbReference type="GO" id="GO:0005737">
    <property type="term" value="C:cytoplasm"/>
    <property type="evidence" value="ECO:0007669"/>
    <property type="project" value="UniProtKB-SubCell"/>
</dbReference>
<dbReference type="GO" id="GO:0061630">
    <property type="term" value="F:ubiquitin protein ligase activity"/>
    <property type="evidence" value="ECO:0000318"/>
    <property type="project" value="GO_Central"/>
</dbReference>
<dbReference type="GO" id="GO:0008270">
    <property type="term" value="F:zinc ion binding"/>
    <property type="evidence" value="ECO:0007669"/>
    <property type="project" value="UniProtKB-KW"/>
</dbReference>
<dbReference type="GO" id="GO:0000209">
    <property type="term" value="P:protein polyubiquitination"/>
    <property type="evidence" value="ECO:0000318"/>
    <property type="project" value="GO_Central"/>
</dbReference>
<dbReference type="GO" id="GO:0006511">
    <property type="term" value="P:ubiquitin-dependent protein catabolic process"/>
    <property type="evidence" value="ECO:0000318"/>
    <property type="project" value="GO_Central"/>
</dbReference>
<dbReference type="CDD" id="cd16549">
    <property type="entry name" value="RING-HC_RNF166"/>
    <property type="match status" value="1"/>
</dbReference>
<dbReference type="Gene3D" id="3.30.40.10">
    <property type="entry name" value="Zinc/RING finger domain, C3HC4 (zinc finger)"/>
    <property type="match status" value="1"/>
</dbReference>
<dbReference type="InterPro" id="IPR008598">
    <property type="entry name" value="Di19_Zn-bd"/>
</dbReference>
<dbReference type="InterPro" id="IPR051438">
    <property type="entry name" value="RNF_E3_ubiq-protein_ligase"/>
</dbReference>
<dbReference type="InterPro" id="IPR003903">
    <property type="entry name" value="UIM_dom"/>
</dbReference>
<dbReference type="InterPro" id="IPR034734">
    <property type="entry name" value="ZF_C2HC_RNF"/>
</dbReference>
<dbReference type="InterPro" id="IPR001841">
    <property type="entry name" value="Znf_RING"/>
</dbReference>
<dbReference type="InterPro" id="IPR013083">
    <property type="entry name" value="Znf_RING/FYVE/PHD"/>
</dbReference>
<dbReference type="InterPro" id="IPR017907">
    <property type="entry name" value="Znf_RING_CS"/>
</dbReference>
<dbReference type="PANTHER" id="PTHR46016:SF4">
    <property type="entry name" value="E3 UBIQUITIN-PROTEIN LIGASE RNF166"/>
    <property type="match status" value="1"/>
</dbReference>
<dbReference type="PANTHER" id="PTHR46016">
    <property type="entry name" value="ZINC FINGER, RING/FYVE/PHD-TYPE"/>
    <property type="match status" value="1"/>
</dbReference>
<dbReference type="Pfam" id="PF13923">
    <property type="entry name" value="zf-C3HC4_2"/>
    <property type="match status" value="1"/>
</dbReference>
<dbReference type="Pfam" id="PF05605">
    <property type="entry name" value="zf-Di19"/>
    <property type="match status" value="1"/>
</dbReference>
<dbReference type="Pfam" id="PF18574">
    <property type="entry name" value="zf_C2HC_14"/>
    <property type="match status" value="1"/>
</dbReference>
<dbReference type="SMART" id="SM00184">
    <property type="entry name" value="RING"/>
    <property type="match status" value="1"/>
</dbReference>
<dbReference type="SUPFAM" id="SSF57850">
    <property type="entry name" value="RING/U-box"/>
    <property type="match status" value="1"/>
</dbReference>
<dbReference type="PROSITE" id="PS50330">
    <property type="entry name" value="UIM"/>
    <property type="match status" value="1"/>
</dbReference>
<dbReference type="PROSITE" id="PS51803">
    <property type="entry name" value="ZF_C2HC_RNF"/>
    <property type="match status" value="1"/>
</dbReference>
<dbReference type="PROSITE" id="PS00518">
    <property type="entry name" value="ZF_RING_1"/>
    <property type="match status" value="1"/>
</dbReference>
<dbReference type="PROSITE" id="PS50089">
    <property type="entry name" value="ZF_RING_2"/>
    <property type="match status" value="1"/>
</dbReference>
<name>RN166_XENLA</name>
<organism>
    <name type="scientific">Xenopus laevis</name>
    <name type="common">African clawed frog</name>
    <dbReference type="NCBI Taxonomy" id="8355"/>
    <lineage>
        <taxon>Eukaryota</taxon>
        <taxon>Metazoa</taxon>
        <taxon>Chordata</taxon>
        <taxon>Craniata</taxon>
        <taxon>Vertebrata</taxon>
        <taxon>Euteleostomi</taxon>
        <taxon>Amphibia</taxon>
        <taxon>Batrachia</taxon>
        <taxon>Anura</taxon>
        <taxon>Pipoidea</taxon>
        <taxon>Pipidae</taxon>
        <taxon>Xenopodinae</taxon>
        <taxon>Xenopus</taxon>
        <taxon>Xenopus</taxon>
    </lineage>
</organism>
<reference key="1">
    <citation type="submission" date="2005-10" db="EMBL/GenBank/DDBJ databases">
        <authorList>
            <consortium name="NIH - Xenopus Gene Collection (XGC) project"/>
        </authorList>
    </citation>
    <scope>NUCLEOTIDE SEQUENCE [LARGE SCALE MRNA]</scope>
    <source>
        <tissue>Testis</tissue>
    </source>
</reference>
<proteinExistence type="evidence at transcript level"/>
<comment type="function">
    <text evidence="1">E3 ubiquitin-protein ligase that promotes the ubiquitination of different substrates.</text>
</comment>
<comment type="catalytic activity">
    <reaction evidence="1">
        <text>S-ubiquitinyl-[E2 ubiquitin-conjugating enzyme]-L-cysteine + [acceptor protein]-L-lysine = [E2 ubiquitin-conjugating enzyme]-L-cysteine + N(6)-ubiquitinyl-[acceptor protein]-L-lysine.</text>
        <dbReference type="EC" id="2.3.2.27"/>
    </reaction>
</comment>
<comment type="pathway">
    <text evidence="1">Protein modification; protein ubiquitination.</text>
</comment>
<comment type="subcellular location">
    <subcellularLocation>
        <location evidence="1">Cytoplasm</location>
    </subcellularLocation>
</comment>
<accession>Q3KPU8</accession>
<sequence length="241" mass="26774">MAMFRNLVASSQHRQHHSHQSLATPSSADSLETQFGCPICLEVYYKPVAIGSCGHTFCGECLQPCLQVSSPLCPLCRMPFDPKKVDKASNVDKQLSSYKAPCRGCSKKVTLAKMRAHISSCPKVQEQMANCPKFVPVLPTSQPIPSNIPNRSTFVCPYCGARNLDQQELVKHCMENHRNDPNKVVCPICSAMPWGDPSYKSANFLQHLLHRHKFSYDTFVDYSIDEEAALQAALALSLSEN</sequence>
<evidence type="ECO:0000250" key="1">
    <source>
        <dbReference type="UniProtKB" id="Q96A37"/>
    </source>
</evidence>
<evidence type="ECO:0000255" key="2">
    <source>
        <dbReference type="PROSITE-ProRule" id="PRU00175"/>
    </source>
</evidence>
<evidence type="ECO:0000255" key="3">
    <source>
        <dbReference type="PROSITE-ProRule" id="PRU00213"/>
    </source>
</evidence>
<evidence type="ECO:0000255" key="4">
    <source>
        <dbReference type="PROSITE-ProRule" id="PRU01144"/>
    </source>
</evidence>
<evidence type="ECO:0000256" key="5">
    <source>
        <dbReference type="SAM" id="MobiDB-lite"/>
    </source>
</evidence>
<gene>
    <name type="primary">rnf166</name>
</gene>
<feature type="chain" id="PRO_0000245592" description="E3 ubiquitin-protein ligase RNF166">
    <location>
        <begin position="1"/>
        <end position="241"/>
    </location>
</feature>
<feature type="domain" description="UIM" evidence="3">
    <location>
        <begin position="225"/>
        <end position="241"/>
    </location>
</feature>
<feature type="zinc finger region" description="RING-type" evidence="2">
    <location>
        <begin position="37"/>
        <end position="77"/>
    </location>
</feature>
<feature type="zinc finger region" description="C2HC RNF-type" evidence="4">
    <location>
        <begin position="102"/>
        <end position="121"/>
    </location>
</feature>
<feature type="region of interest" description="Disordered" evidence="5">
    <location>
        <begin position="8"/>
        <end position="30"/>
    </location>
</feature>
<feature type="binding site" evidence="4">
    <location>
        <position position="102"/>
    </location>
    <ligand>
        <name>Zn(2+)</name>
        <dbReference type="ChEBI" id="CHEBI:29105"/>
    </ligand>
</feature>
<feature type="binding site" evidence="4">
    <location>
        <position position="105"/>
    </location>
    <ligand>
        <name>Zn(2+)</name>
        <dbReference type="ChEBI" id="CHEBI:29105"/>
    </ligand>
</feature>
<feature type="binding site" evidence="4">
    <location>
        <position position="117"/>
    </location>
    <ligand>
        <name>Zn(2+)</name>
        <dbReference type="ChEBI" id="CHEBI:29105"/>
    </ligand>
</feature>
<feature type="binding site" evidence="4">
    <location>
        <position position="121"/>
    </location>
    <ligand>
        <name>Zn(2+)</name>
        <dbReference type="ChEBI" id="CHEBI:29105"/>
    </ligand>
</feature>
<protein>
    <recommendedName>
        <fullName>E3 ubiquitin-protein ligase RNF166</fullName>
        <ecNumber>2.3.2.27</ecNumber>
    </recommendedName>
    <alternativeName>
        <fullName>RING finger protein 166</fullName>
    </alternativeName>
    <alternativeName>
        <fullName>RING-type E3 ubiquitin transferase RNF166</fullName>
    </alternativeName>
</protein>